<gene>
    <name type="primary">pelA</name>
    <name type="ORF">AFUB_017880</name>
</gene>
<comment type="function">
    <text evidence="1">Pectinolytic enzymes consist of four classes of enzymes: pectin lyase, polygalacturonase, pectin methylesterase and rhamnogalacturonase. Among pectinolytic enzymes, pectin lyase is the most important in depolymerization of pectin, since it cleaves internal glycosidic bonds of highly methylated pectins (By similarity).</text>
</comment>
<comment type="catalytic activity">
    <reaction>
        <text>Eliminative cleavage of (1-&gt;4)-alpha-D-galacturonan methyl ester to give oligosaccharides with 4-deoxy-6-O-methyl-alpha-D-galact-4-enuronosyl groups at their non-reducing ends.</text>
        <dbReference type="EC" id="4.2.2.10"/>
    </reaction>
</comment>
<comment type="subcellular location">
    <subcellularLocation>
        <location evidence="1">Secreted</location>
    </subcellularLocation>
</comment>
<comment type="similarity">
    <text evidence="3">Belongs to the polysaccharide lyase 1 family.</text>
</comment>
<protein>
    <recommendedName>
        <fullName>Probable pectin lyase A</fullName>
        <shortName>PLA</shortName>
        <ecNumber>4.2.2.10</ecNumber>
    </recommendedName>
</protein>
<keyword id="KW-0119">Carbohydrate metabolism</keyword>
<keyword id="KW-0961">Cell wall biogenesis/degradation</keyword>
<keyword id="KW-1015">Disulfide bond</keyword>
<keyword id="KW-0325">Glycoprotein</keyword>
<keyword id="KW-0456">Lyase</keyword>
<keyword id="KW-0624">Polysaccharide degradation</keyword>
<keyword id="KW-0964">Secreted</keyword>
<keyword id="KW-0732">Signal</keyword>
<feature type="signal peptide" evidence="2">
    <location>
        <begin position="1"/>
        <end position="18"/>
    </location>
</feature>
<feature type="chain" id="PRO_0000394338" description="Probable pectin lyase A">
    <location>
        <begin position="19"/>
        <end position="378"/>
    </location>
</feature>
<feature type="active site" evidence="2">
    <location>
        <position position="254"/>
    </location>
</feature>
<feature type="glycosylation site" description="N-linked (GlcNAc...) asparagine" evidence="2">
    <location>
        <position position="127"/>
    </location>
</feature>
<feature type="disulfide bond" evidence="1">
    <location>
        <begin position="81"/>
        <end position="100"/>
    </location>
</feature>
<feature type="disulfide bond" evidence="1">
    <location>
        <begin position="90"/>
        <end position="224"/>
    </location>
</feature>
<feature type="disulfide bond" evidence="1">
    <location>
        <begin position="321"/>
        <end position="329"/>
    </location>
</feature>
<organism>
    <name type="scientific">Aspergillus fumigatus (strain CBS 144.89 / FGSC A1163 / CEA10)</name>
    <name type="common">Neosartorya fumigata</name>
    <dbReference type="NCBI Taxonomy" id="451804"/>
    <lineage>
        <taxon>Eukaryota</taxon>
        <taxon>Fungi</taxon>
        <taxon>Dikarya</taxon>
        <taxon>Ascomycota</taxon>
        <taxon>Pezizomycotina</taxon>
        <taxon>Eurotiomycetes</taxon>
        <taxon>Eurotiomycetidae</taxon>
        <taxon>Eurotiales</taxon>
        <taxon>Aspergillaceae</taxon>
        <taxon>Aspergillus</taxon>
        <taxon>Aspergillus subgen. Fumigati</taxon>
    </lineage>
</organism>
<sequence length="378" mass="39382">MKYQDLLAIAGCIANAGAVSVSGAAEGFAKGVTGGGSATAVYPSTTAELVSYLGDSEARVIVLTKTFDFTGTEGTTTATGCAPWGTASACQLAINQNNWCTNYEPNAPSVSVTYDNAGILGITVKSNKSLIGSGSSGVIKGKGLRIVSGASNIIIQNIAITDINPKYVWGGDAITIDNADMVWIDHVTTARIGRQHLVLGTSASNRVTISNNYFNGVSSYSATCDGYHYWGIYLDGSNDLVTMKGNYIYHFSGRSPKVQGNTLLHAVNNYWYDSSGHAFEIGSGGYVLAEGNVFQNIDTIVQSPVDGQLFTSPDSNTNKVCSTYLGHVCQVNGFGSSGTFSQADTGFLSNFAGKNIASASAYTAVQSTVPSSAGQGKI</sequence>
<dbReference type="EC" id="4.2.2.10"/>
<dbReference type="EMBL" id="DS499595">
    <property type="protein sequence ID" value="EDP53745.1"/>
    <property type="molecule type" value="Genomic_DNA"/>
</dbReference>
<dbReference type="SMR" id="B0XT36"/>
<dbReference type="GlyCosmos" id="B0XT36">
    <property type="glycosylation" value="1 site, No reported glycans"/>
</dbReference>
<dbReference type="EnsemblFungi" id="EDP53745">
    <property type="protein sequence ID" value="EDP53745"/>
    <property type="gene ID" value="AFUB_017880"/>
</dbReference>
<dbReference type="VEuPathDB" id="FungiDB:AFUB_017880"/>
<dbReference type="HOGENOM" id="CLU_021980_0_1_1"/>
<dbReference type="OrthoDB" id="88760at5052"/>
<dbReference type="PhylomeDB" id="B0XT36"/>
<dbReference type="Proteomes" id="UP000001699">
    <property type="component" value="Unassembled WGS sequence"/>
</dbReference>
<dbReference type="GO" id="GO:0005576">
    <property type="term" value="C:extracellular region"/>
    <property type="evidence" value="ECO:0007669"/>
    <property type="project" value="UniProtKB-SubCell"/>
</dbReference>
<dbReference type="GO" id="GO:0030570">
    <property type="term" value="F:pectate lyase activity"/>
    <property type="evidence" value="ECO:0007669"/>
    <property type="project" value="InterPro"/>
</dbReference>
<dbReference type="GO" id="GO:0047490">
    <property type="term" value="F:pectin lyase activity"/>
    <property type="evidence" value="ECO:0000250"/>
    <property type="project" value="UniProtKB"/>
</dbReference>
<dbReference type="GO" id="GO:0071555">
    <property type="term" value="P:cell wall organization"/>
    <property type="evidence" value="ECO:0007669"/>
    <property type="project" value="UniProtKB-KW"/>
</dbReference>
<dbReference type="GO" id="GO:0045490">
    <property type="term" value="P:pectin catabolic process"/>
    <property type="evidence" value="ECO:0000250"/>
    <property type="project" value="UniProtKB"/>
</dbReference>
<dbReference type="FunFam" id="2.160.20.10:FF:000003">
    <property type="entry name" value="Pectin lyase F"/>
    <property type="match status" value="1"/>
</dbReference>
<dbReference type="Gene3D" id="2.160.20.10">
    <property type="entry name" value="Single-stranded right-handed beta-helix, Pectin lyase-like"/>
    <property type="match status" value="1"/>
</dbReference>
<dbReference type="InterPro" id="IPR002022">
    <property type="entry name" value="Pec_lyase"/>
</dbReference>
<dbReference type="InterPro" id="IPR012334">
    <property type="entry name" value="Pectin_lyas_fold"/>
</dbReference>
<dbReference type="InterPro" id="IPR011050">
    <property type="entry name" value="Pectin_lyase_fold/virulence"/>
</dbReference>
<dbReference type="InterPro" id="IPR045032">
    <property type="entry name" value="PEL"/>
</dbReference>
<dbReference type="PANTHER" id="PTHR31683">
    <property type="entry name" value="PECTATE LYASE 18-RELATED"/>
    <property type="match status" value="1"/>
</dbReference>
<dbReference type="PANTHER" id="PTHR31683:SF16">
    <property type="entry name" value="PECTIN LYASE A-RELATED"/>
    <property type="match status" value="1"/>
</dbReference>
<dbReference type="Pfam" id="PF00544">
    <property type="entry name" value="Pectate_lyase_4"/>
    <property type="match status" value="1"/>
</dbReference>
<dbReference type="SMART" id="SM00656">
    <property type="entry name" value="Amb_all"/>
    <property type="match status" value="1"/>
</dbReference>
<dbReference type="SUPFAM" id="SSF51126">
    <property type="entry name" value="Pectin lyase-like"/>
    <property type="match status" value="1"/>
</dbReference>
<proteinExistence type="inferred from homology"/>
<accession>B0XT36</accession>
<evidence type="ECO:0000250" key="1"/>
<evidence type="ECO:0000255" key="2"/>
<evidence type="ECO:0000305" key="3"/>
<reference key="1">
    <citation type="journal article" date="2008" name="PLoS Genet.">
        <title>Genomic islands in the pathogenic filamentous fungus Aspergillus fumigatus.</title>
        <authorList>
            <person name="Fedorova N.D."/>
            <person name="Khaldi N."/>
            <person name="Joardar V.S."/>
            <person name="Maiti R."/>
            <person name="Amedeo P."/>
            <person name="Anderson M.J."/>
            <person name="Crabtree J."/>
            <person name="Silva J.C."/>
            <person name="Badger J.H."/>
            <person name="Albarraq A."/>
            <person name="Angiuoli S."/>
            <person name="Bussey H."/>
            <person name="Bowyer P."/>
            <person name="Cotty P.J."/>
            <person name="Dyer P.S."/>
            <person name="Egan A."/>
            <person name="Galens K."/>
            <person name="Fraser-Liggett C.M."/>
            <person name="Haas B.J."/>
            <person name="Inman J.M."/>
            <person name="Kent R."/>
            <person name="Lemieux S."/>
            <person name="Malavazi I."/>
            <person name="Orvis J."/>
            <person name="Roemer T."/>
            <person name="Ronning C.M."/>
            <person name="Sundaram J.P."/>
            <person name="Sutton G."/>
            <person name="Turner G."/>
            <person name="Venter J.C."/>
            <person name="White O.R."/>
            <person name="Whitty B.R."/>
            <person name="Youngman P."/>
            <person name="Wolfe K.H."/>
            <person name="Goldman G.H."/>
            <person name="Wortman J.R."/>
            <person name="Jiang B."/>
            <person name="Denning D.W."/>
            <person name="Nierman W.C."/>
        </authorList>
    </citation>
    <scope>NUCLEOTIDE SEQUENCE [LARGE SCALE GENOMIC DNA]</scope>
    <source>
        <strain>CBS 144.89 / FGSC A1163 / CEA10</strain>
    </source>
</reference>
<name>PELA_ASPFC</name>